<name>EST1_CULPI</name>
<comment type="function">
    <text>Overproduction of nonspecific esterases is a common mechanism of resistance to organophosphate insecticides.</text>
</comment>
<comment type="catalytic activity">
    <reaction evidence="3">
        <text>a carboxylic ester + H2O = an alcohol + a carboxylate + H(+)</text>
        <dbReference type="Rhea" id="RHEA:21164"/>
        <dbReference type="ChEBI" id="CHEBI:15377"/>
        <dbReference type="ChEBI" id="CHEBI:15378"/>
        <dbReference type="ChEBI" id="CHEBI:29067"/>
        <dbReference type="ChEBI" id="CHEBI:30879"/>
        <dbReference type="ChEBI" id="CHEBI:33308"/>
        <dbReference type="EC" id="3.1.1.1"/>
    </reaction>
</comment>
<comment type="miscellaneous">
    <text>There are two such esterases: A and B. Alleles of both A and B are known.</text>
</comment>
<comment type="similarity">
    <text evidence="4">Belongs to the type-B carboxylesterase/lipase family.</text>
</comment>
<sequence>MSLESLTVQTKYGPVRGKRNVSLLGQEYVSFQGIPYARAPEGELRFKAPVPPQKWTETLDCTQQCEPCYHFDRRLQKIVGCEDSLKINVFAKEINPSTPLPVMLYIYGGGFTEGTSGTELYGPDFLVQKDIVLVSFNYRIGALGFLCCQSEQDGVPGNAGLKDQNLAIRWVLENIAAFGGDPKRVTLAGHSAGAASVQYHLISDASKDLFQRRIVMSGSTYSSWSLTRQRNWVEKLAKAIGWDGQGGESGALRFLRRAKPEDIVAHQEKLLTDQDMQDDIFTPFGPTVEPYLTEQCIIPKAPFEMARTAWGDKIDIMIGGTSEEGLLLLQKIKLHPELLSHPHLFLGNVPPNLKISMEKRIEFAAKLKQRYYPDSIPSMENNLGYVHMMSDRVFWHGLHRTILARAARSRARTFVYRICLDSEFYNHYRIMMIDPKLRGTAHADELSYLFSNFTQQVPGKETFEYRGLQTLVDVFSAFVINGDPNCGMTAKGGVVFEPNAQTKPTFKCLNIANDGVAFVDYPDADRLDMWDAMYVNDELF</sequence>
<keyword id="KW-1015">Disulfide bond</keyword>
<keyword id="KW-0325">Glycoprotein</keyword>
<keyword id="KW-0378">Hydrolase</keyword>
<keyword id="KW-0719">Serine esterase</keyword>
<keyword id="KW-0732">Signal</keyword>
<accession>P16854</accession>
<organism>
    <name type="scientific">Culex pipiens</name>
    <name type="common">House mosquito</name>
    <dbReference type="NCBI Taxonomy" id="7175"/>
    <lineage>
        <taxon>Eukaryota</taxon>
        <taxon>Metazoa</taxon>
        <taxon>Ecdysozoa</taxon>
        <taxon>Arthropoda</taxon>
        <taxon>Hexapoda</taxon>
        <taxon>Insecta</taxon>
        <taxon>Pterygota</taxon>
        <taxon>Neoptera</taxon>
        <taxon>Endopterygota</taxon>
        <taxon>Diptera</taxon>
        <taxon>Nematocera</taxon>
        <taxon>Culicoidea</taxon>
        <taxon>Culicidae</taxon>
        <taxon>Culicinae</taxon>
        <taxon>Culicini</taxon>
        <taxon>Culex</taxon>
        <taxon>Culex</taxon>
    </lineage>
</organism>
<gene>
    <name type="primary">B1</name>
</gene>
<evidence type="ECO:0000250" key="1"/>
<evidence type="ECO:0000255" key="2"/>
<evidence type="ECO:0000255" key="3">
    <source>
        <dbReference type="PROSITE-ProRule" id="PRU10039"/>
    </source>
</evidence>
<evidence type="ECO:0000305" key="4"/>
<feature type="signal peptide">
    <location>
        <begin position="1"/>
        <end status="unknown"/>
    </location>
</feature>
<feature type="chain" id="PRO_0000008551" description="Esterase B1">
    <location>
        <begin status="unknown"/>
        <end position="540"/>
    </location>
</feature>
<feature type="active site" description="Acyl-ester intermediate" evidence="3">
    <location>
        <position position="191"/>
    </location>
</feature>
<feature type="active site" description="Charge relay system" evidence="1">
    <location>
        <position position="324"/>
    </location>
</feature>
<feature type="active site" description="Charge relay system" evidence="1">
    <location>
        <position position="442"/>
    </location>
</feature>
<feature type="glycosylation site" description="N-linked (GlcNAc...) asparagine" evidence="2">
    <location>
        <position position="452"/>
    </location>
</feature>
<feature type="disulfide bond" evidence="1">
    <location>
        <begin position="68"/>
        <end position="81"/>
    </location>
</feature>
<reference key="1">
    <citation type="journal article" date="1990" name="Proc. Natl. Acad. Sci. U.S.A.">
        <title>Characterization of amplification core and esterase B1 gene responsible for insecticide resistance in Culex.</title>
        <authorList>
            <person name="Mouches C."/>
            <person name="Pauplin Y."/>
            <person name="Agarwal M."/>
            <person name="Lemieux L."/>
            <person name="Herzog M."/>
            <person name="Abadon M."/>
            <person name="Beyssat-Arnaouty V."/>
            <person name="Hyrien O."/>
            <person name="de Saint Vincent B.R."/>
            <person name="Georghiou G.P."/>
            <person name="Pasteur N."/>
        </authorList>
    </citation>
    <scope>NUCLEOTIDE SEQUENCE [GENOMIC DNA]</scope>
    <source>
        <strain>TEM-R</strain>
    </source>
</reference>
<protein>
    <recommendedName>
        <fullName>Esterase B1</fullName>
        <ecNumber>3.1.1.1</ecNumber>
    </recommendedName>
</protein>
<dbReference type="EC" id="3.1.1.1"/>
<dbReference type="EMBL" id="M32328">
    <property type="protein sequence ID" value="AAA28289.1"/>
    <property type="molecule type" value="Genomic_DNA"/>
</dbReference>
<dbReference type="PIR" id="A35986">
    <property type="entry name" value="A35986"/>
</dbReference>
<dbReference type="SMR" id="P16854"/>
<dbReference type="ESTHER" id="culpi-1este">
    <property type="family name" value="Carb_B_Arthropoda"/>
</dbReference>
<dbReference type="MEROPS" id="S09.980"/>
<dbReference type="GlyCosmos" id="P16854">
    <property type="glycosylation" value="1 site, No reported glycans"/>
</dbReference>
<dbReference type="GO" id="GO:0106435">
    <property type="term" value="F:carboxylesterase activity"/>
    <property type="evidence" value="ECO:0007669"/>
    <property type="project" value="UniProtKB-EC"/>
</dbReference>
<dbReference type="Gene3D" id="3.40.50.1820">
    <property type="entry name" value="alpha/beta hydrolase"/>
    <property type="match status" value="1"/>
</dbReference>
<dbReference type="InterPro" id="IPR029058">
    <property type="entry name" value="AB_hydrolase_fold"/>
</dbReference>
<dbReference type="InterPro" id="IPR002018">
    <property type="entry name" value="CarbesteraseB"/>
</dbReference>
<dbReference type="InterPro" id="IPR019826">
    <property type="entry name" value="Carboxylesterase_B_AS"/>
</dbReference>
<dbReference type="PANTHER" id="PTHR43142">
    <property type="entry name" value="CARBOXYLIC ESTER HYDROLASE"/>
    <property type="match status" value="1"/>
</dbReference>
<dbReference type="PANTHER" id="PTHR43142:SF1">
    <property type="entry name" value="CARBOXYLIC ESTER HYDROLASE"/>
    <property type="match status" value="1"/>
</dbReference>
<dbReference type="Pfam" id="PF00135">
    <property type="entry name" value="COesterase"/>
    <property type="match status" value="1"/>
</dbReference>
<dbReference type="SUPFAM" id="SSF53474">
    <property type="entry name" value="alpha/beta-Hydrolases"/>
    <property type="match status" value="1"/>
</dbReference>
<dbReference type="PROSITE" id="PS00122">
    <property type="entry name" value="CARBOXYLESTERASE_B_1"/>
    <property type="match status" value="1"/>
</dbReference>
<proteinExistence type="inferred from homology"/>